<accession>P64500</accession>
<accession>P76266</accession>
<evidence type="ECO:0000255" key="1"/>
<evidence type="ECO:0000305" key="2"/>
<comment type="subcellular location">
    <subcellularLocation>
        <location evidence="2">Cell membrane</location>
        <topology evidence="2">Single-pass membrane protein</topology>
    </subcellularLocation>
</comment>
<reference key="1">
    <citation type="journal article" date="2002" name="Proc. Natl. Acad. Sci. U.S.A.">
        <title>Extensive mosaic structure revealed by the complete genome sequence of uropathogenic Escherichia coli.</title>
        <authorList>
            <person name="Welch R.A."/>
            <person name="Burland V."/>
            <person name="Plunkett G. III"/>
            <person name="Redford P."/>
            <person name="Roesch P."/>
            <person name="Rasko D."/>
            <person name="Buckles E.L."/>
            <person name="Liou S.-R."/>
            <person name="Boutin A."/>
            <person name="Hackett J."/>
            <person name="Stroud D."/>
            <person name="Mayhew G.F."/>
            <person name="Rose D.J."/>
            <person name="Zhou S."/>
            <person name="Schwartz D.C."/>
            <person name="Perna N.T."/>
            <person name="Mobley H.L.T."/>
            <person name="Donnenberg M.S."/>
            <person name="Blattner F.R."/>
        </authorList>
    </citation>
    <scope>NUCLEOTIDE SEQUENCE [LARGE SCALE GENOMIC DNA]</scope>
    <source>
        <strain>CFT073 / ATCC 700928 / UPEC</strain>
    </source>
</reference>
<protein>
    <recommendedName>
        <fullName>Uncharacterized protein YebO</fullName>
    </recommendedName>
</protein>
<proteinExistence type="predicted"/>
<feature type="chain" id="PRO_0000169048" description="Uncharacterized protein YebO">
    <location>
        <begin position="1"/>
        <end position="95"/>
    </location>
</feature>
<feature type="transmembrane region" description="Helical" evidence="1">
    <location>
        <begin position="12"/>
        <end position="32"/>
    </location>
</feature>
<keyword id="KW-1003">Cell membrane</keyword>
<keyword id="KW-0472">Membrane</keyword>
<keyword id="KW-1185">Reference proteome</keyword>
<keyword id="KW-0812">Transmembrane</keyword>
<keyword id="KW-1133">Transmembrane helix</keyword>
<gene>
    <name type="primary">yebO</name>
    <name type="ordered locus">c2233</name>
</gene>
<sequence>MNEVVNSGVMNIASLVVSVVVLLIGLILWFFINRASSRTNEQIELLEALLDQQKRQNALLRRLCEANEPEKADKKTVESQKSVEDEDIIRLVAER</sequence>
<name>YEBO_ECOL6</name>
<organism>
    <name type="scientific">Escherichia coli O6:H1 (strain CFT073 / ATCC 700928 / UPEC)</name>
    <dbReference type="NCBI Taxonomy" id="199310"/>
    <lineage>
        <taxon>Bacteria</taxon>
        <taxon>Pseudomonadati</taxon>
        <taxon>Pseudomonadota</taxon>
        <taxon>Gammaproteobacteria</taxon>
        <taxon>Enterobacterales</taxon>
        <taxon>Enterobacteriaceae</taxon>
        <taxon>Escherichia</taxon>
    </lineage>
</organism>
<dbReference type="EMBL" id="AE014075">
    <property type="protein sequence ID" value="AAN80692.1"/>
    <property type="molecule type" value="Genomic_DNA"/>
</dbReference>
<dbReference type="RefSeq" id="WP_001006866.1">
    <property type="nucleotide sequence ID" value="NZ_CP051263.1"/>
</dbReference>
<dbReference type="SMR" id="P64500"/>
<dbReference type="STRING" id="199310.c2233"/>
<dbReference type="KEGG" id="ecc:c2233"/>
<dbReference type="eggNOG" id="ENOG5032S3N">
    <property type="taxonomic scope" value="Bacteria"/>
</dbReference>
<dbReference type="HOGENOM" id="CLU_165389_1_0_6"/>
<dbReference type="BioCyc" id="ECOL199310:C2233-MONOMER"/>
<dbReference type="Proteomes" id="UP000001410">
    <property type="component" value="Chromosome"/>
</dbReference>
<dbReference type="GO" id="GO:0005886">
    <property type="term" value="C:plasma membrane"/>
    <property type="evidence" value="ECO:0007669"/>
    <property type="project" value="UniProtKB-SubCell"/>
</dbReference>
<dbReference type="InterPro" id="IPR025594">
    <property type="entry name" value="YebO"/>
</dbReference>
<dbReference type="Pfam" id="PF13974">
    <property type="entry name" value="YebO"/>
    <property type="match status" value="1"/>
</dbReference>